<organism>
    <name type="scientific">Vibrio cholerae serotype O1 (strain ATCC 39315 / El Tor Inaba N16961)</name>
    <dbReference type="NCBI Taxonomy" id="243277"/>
    <lineage>
        <taxon>Bacteria</taxon>
        <taxon>Pseudomonadati</taxon>
        <taxon>Pseudomonadota</taxon>
        <taxon>Gammaproteobacteria</taxon>
        <taxon>Vibrionales</taxon>
        <taxon>Vibrionaceae</taxon>
        <taxon>Vibrio</taxon>
    </lineage>
</organism>
<keyword id="KW-0963">Cytoplasm</keyword>
<keyword id="KW-0413">Isomerase</keyword>
<keyword id="KW-0464">Manganese</keyword>
<keyword id="KW-0479">Metal-binding</keyword>
<keyword id="KW-1185">Reference proteome</keyword>
<comment type="function">
    <text evidence="1">Isomerase that catalyzes the conversion of deoxy-ribose 1-phosphate (dRib-1-P) and ribose 1-phosphate (Rib-1-P) to deoxy-ribose 5-phosphate (dRib-5-P) and ribose 5-phosphate (Rib-5-P), respectively.</text>
</comment>
<comment type="catalytic activity">
    <reaction evidence="1">
        <text>2-deoxy-alpha-D-ribose 1-phosphate = 2-deoxy-D-ribose 5-phosphate</text>
        <dbReference type="Rhea" id="RHEA:27658"/>
        <dbReference type="ChEBI" id="CHEBI:57259"/>
        <dbReference type="ChEBI" id="CHEBI:62877"/>
        <dbReference type="EC" id="5.4.2.7"/>
    </reaction>
</comment>
<comment type="catalytic activity">
    <reaction evidence="1">
        <text>alpha-D-ribose 1-phosphate = D-ribose 5-phosphate</text>
        <dbReference type="Rhea" id="RHEA:18793"/>
        <dbReference type="ChEBI" id="CHEBI:57720"/>
        <dbReference type="ChEBI" id="CHEBI:78346"/>
        <dbReference type="EC" id="5.4.2.7"/>
    </reaction>
</comment>
<comment type="cofactor">
    <cofactor evidence="1">
        <name>Mn(2+)</name>
        <dbReference type="ChEBI" id="CHEBI:29035"/>
    </cofactor>
    <text evidence="1">Binds 2 manganese ions.</text>
</comment>
<comment type="pathway">
    <text evidence="1">Carbohydrate degradation; 2-deoxy-D-ribose 1-phosphate degradation; D-glyceraldehyde 3-phosphate and acetaldehyde from 2-deoxy-alpha-D-ribose 1-phosphate: step 1/2.</text>
</comment>
<comment type="subcellular location">
    <subcellularLocation>
        <location evidence="1">Cytoplasm</location>
    </subcellularLocation>
</comment>
<comment type="similarity">
    <text evidence="1">Belongs to the phosphopentomutase family.</text>
</comment>
<evidence type="ECO:0000255" key="1">
    <source>
        <dbReference type="HAMAP-Rule" id="MF_00740"/>
    </source>
</evidence>
<reference key="1">
    <citation type="journal article" date="2000" name="Nature">
        <title>DNA sequence of both chromosomes of the cholera pathogen Vibrio cholerae.</title>
        <authorList>
            <person name="Heidelberg J.F."/>
            <person name="Eisen J.A."/>
            <person name="Nelson W.C."/>
            <person name="Clayton R.A."/>
            <person name="Gwinn M.L."/>
            <person name="Dodson R.J."/>
            <person name="Haft D.H."/>
            <person name="Hickey E.K."/>
            <person name="Peterson J.D."/>
            <person name="Umayam L.A."/>
            <person name="Gill S.R."/>
            <person name="Nelson K.E."/>
            <person name="Read T.D."/>
            <person name="Tettelin H."/>
            <person name="Richardson D.L."/>
            <person name="Ermolaeva M.D."/>
            <person name="Vamathevan J.J."/>
            <person name="Bass S."/>
            <person name="Qin H."/>
            <person name="Dragoi I."/>
            <person name="Sellers P."/>
            <person name="McDonald L.A."/>
            <person name="Utterback T.R."/>
            <person name="Fleischmann R.D."/>
            <person name="Nierman W.C."/>
            <person name="White O."/>
            <person name="Salzberg S.L."/>
            <person name="Smith H.O."/>
            <person name="Colwell R.R."/>
            <person name="Mekalanos J.J."/>
            <person name="Venter J.C."/>
            <person name="Fraser C.M."/>
        </authorList>
    </citation>
    <scope>NUCLEOTIDE SEQUENCE [LARGE SCALE GENOMIC DNA]</scope>
    <source>
        <strain>ATCC 39315 / El Tor Inaba N16961</strain>
    </source>
</reference>
<proteinExistence type="inferred from homology"/>
<feature type="chain" id="PRO_0000199861" description="Phosphopentomutase">
    <location>
        <begin position="1"/>
        <end position="406"/>
    </location>
</feature>
<feature type="binding site" evidence="1">
    <location>
        <position position="10"/>
    </location>
    <ligand>
        <name>Mn(2+)</name>
        <dbReference type="ChEBI" id="CHEBI:29035"/>
        <label>1</label>
    </ligand>
</feature>
<feature type="binding site" evidence="1">
    <location>
        <position position="305"/>
    </location>
    <ligand>
        <name>Mn(2+)</name>
        <dbReference type="ChEBI" id="CHEBI:29035"/>
        <label>2</label>
    </ligand>
</feature>
<feature type="binding site" evidence="1">
    <location>
        <position position="310"/>
    </location>
    <ligand>
        <name>Mn(2+)</name>
        <dbReference type="ChEBI" id="CHEBI:29035"/>
        <label>2</label>
    </ligand>
</feature>
<feature type="binding site" evidence="1">
    <location>
        <position position="346"/>
    </location>
    <ligand>
        <name>Mn(2+)</name>
        <dbReference type="ChEBI" id="CHEBI:29035"/>
        <label>1</label>
    </ligand>
</feature>
<feature type="binding site" evidence="1">
    <location>
        <position position="347"/>
    </location>
    <ligand>
        <name>Mn(2+)</name>
        <dbReference type="ChEBI" id="CHEBI:29035"/>
        <label>1</label>
    </ligand>
</feature>
<feature type="binding site" evidence="1">
    <location>
        <position position="358"/>
    </location>
    <ligand>
        <name>Mn(2+)</name>
        <dbReference type="ChEBI" id="CHEBI:29035"/>
        <label>2</label>
    </ligand>
</feature>
<sequence length="406" mass="44153">MKRAFILVLDSFGIGATADAQAFGDVGSDTLGHIADQCAQGLADNAERKGALQLPNLSKLGLAMAHKESTGRFAPGLDERADIIGAYAHAAELSSGKDTPSGHWEIAGVPVLFEWGYFSDKQNSFPKELTDRILARAGLDGFLGNCHASGTQVLDDLGEEHMRTGKPIFYTSADSVFQIACHEETFGLDRLLELCQIAREELADYNIGRVIARPFVGPGKGQFARTGNRRDLSVEPPSATVLQKLVEEKQGRVVSIGKIADIYAYCGITDKVKATGIPDLFEATLEQIKQAGDNTIVFTNFVDFDSAYGHRRDVAGYAAALEYFDKRLPEVLELMQEDDILILTADHGCDPTWPGTDHTREHIPVLVYGKKVAPGSLGRRDTFADIGQTLASYFGTSPMDYGKNFL</sequence>
<dbReference type="EC" id="5.4.2.7" evidence="1"/>
<dbReference type="EMBL" id="AE003852">
    <property type="protein sequence ID" value="AAF95491.1"/>
    <property type="molecule type" value="Genomic_DNA"/>
</dbReference>
<dbReference type="PIR" id="D82087">
    <property type="entry name" value="D82087"/>
</dbReference>
<dbReference type="RefSeq" id="NP_231978.1">
    <property type="nucleotide sequence ID" value="NC_002505.1"/>
</dbReference>
<dbReference type="RefSeq" id="WP_000816445.1">
    <property type="nucleotide sequence ID" value="NZ_LT906614.1"/>
</dbReference>
<dbReference type="SMR" id="Q9KPL9"/>
<dbReference type="STRING" id="243277.VC_2348"/>
<dbReference type="DNASU" id="2613144"/>
<dbReference type="EnsemblBacteria" id="AAF95491">
    <property type="protein sequence ID" value="AAF95491"/>
    <property type="gene ID" value="VC_2348"/>
</dbReference>
<dbReference type="KEGG" id="vch:VC_2348"/>
<dbReference type="PATRIC" id="fig|243277.26.peg.2235"/>
<dbReference type="eggNOG" id="COG1015">
    <property type="taxonomic scope" value="Bacteria"/>
</dbReference>
<dbReference type="HOGENOM" id="CLU_053861_0_0_6"/>
<dbReference type="UniPathway" id="UPA00002">
    <property type="reaction ID" value="UER00467"/>
</dbReference>
<dbReference type="Proteomes" id="UP000000584">
    <property type="component" value="Chromosome 1"/>
</dbReference>
<dbReference type="GO" id="GO:0005829">
    <property type="term" value="C:cytosol"/>
    <property type="evidence" value="ECO:0000318"/>
    <property type="project" value="GO_Central"/>
</dbReference>
<dbReference type="GO" id="GO:0000287">
    <property type="term" value="F:magnesium ion binding"/>
    <property type="evidence" value="ECO:0007669"/>
    <property type="project" value="InterPro"/>
</dbReference>
<dbReference type="GO" id="GO:0030145">
    <property type="term" value="F:manganese ion binding"/>
    <property type="evidence" value="ECO:0007669"/>
    <property type="project" value="UniProtKB-UniRule"/>
</dbReference>
<dbReference type="GO" id="GO:0008973">
    <property type="term" value="F:phosphopentomutase activity"/>
    <property type="evidence" value="ECO:0000318"/>
    <property type="project" value="GO_Central"/>
</dbReference>
<dbReference type="GO" id="GO:0006018">
    <property type="term" value="P:2-deoxyribose 1-phosphate catabolic process"/>
    <property type="evidence" value="ECO:0007669"/>
    <property type="project" value="UniProtKB-UniRule"/>
</dbReference>
<dbReference type="GO" id="GO:0006015">
    <property type="term" value="P:5-phosphoribose 1-diphosphate biosynthetic process"/>
    <property type="evidence" value="ECO:0007669"/>
    <property type="project" value="UniProtKB-UniPathway"/>
</dbReference>
<dbReference type="GO" id="GO:0043094">
    <property type="term" value="P:metabolic compound salvage"/>
    <property type="evidence" value="ECO:0007669"/>
    <property type="project" value="InterPro"/>
</dbReference>
<dbReference type="GO" id="GO:0009117">
    <property type="term" value="P:nucleotide metabolic process"/>
    <property type="evidence" value="ECO:0007669"/>
    <property type="project" value="InterPro"/>
</dbReference>
<dbReference type="CDD" id="cd16009">
    <property type="entry name" value="PPM"/>
    <property type="match status" value="1"/>
</dbReference>
<dbReference type="FunFam" id="3.30.70.1250:FF:000001">
    <property type="entry name" value="Phosphopentomutase"/>
    <property type="match status" value="1"/>
</dbReference>
<dbReference type="Gene3D" id="3.40.720.10">
    <property type="entry name" value="Alkaline Phosphatase, subunit A"/>
    <property type="match status" value="1"/>
</dbReference>
<dbReference type="Gene3D" id="3.30.70.1250">
    <property type="entry name" value="Phosphopentomutase"/>
    <property type="match status" value="1"/>
</dbReference>
<dbReference type="HAMAP" id="MF_00740">
    <property type="entry name" value="Phosphopentomut"/>
    <property type="match status" value="1"/>
</dbReference>
<dbReference type="InterPro" id="IPR017850">
    <property type="entry name" value="Alkaline_phosphatase_core_sf"/>
</dbReference>
<dbReference type="InterPro" id="IPR010045">
    <property type="entry name" value="DeoB"/>
</dbReference>
<dbReference type="InterPro" id="IPR006124">
    <property type="entry name" value="Metalloenzyme"/>
</dbReference>
<dbReference type="InterPro" id="IPR024052">
    <property type="entry name" value="Phosphopentomutase_DeoB_cap_sf"/>
</dbReference>
<dbReference type="NCBIfam" id="TIGR01696">
    <property type="entry name" value="deoB"/>
    <property type="match status" value="1"/>
</dbReference>
<dbReference type="NCBIfam" id="NF003766">
    <property type="entry name" value="PRK05362.1"/>
    <property type="match status" value="1"/>
</dbReference>
<dbReference type="PANTHER" id="PTHR21110">
    <property type="entry name" value="PHOSPHOPENTOMUTASE"/>
    <property type="match status" value="1"/>
</dbReference>
<dbReference type="PANTHER" id="PTHR21110:SF0">
    <property type="entry name" value="PHOSPHOPENTOMUTASE"/>
    <property type="match status" value="1"/>
</dbReference>
<dbReference type="Pfam" id="PF01676">
    <property type="entry name" value="Metalloenzyme"/>
    <property type="match status" value="1"/>
</dbReference>
<dbReference type="PIRSF" id="PIRSF001491">
    <property type="entry name" value="Ppentomutase"/>
    <property type="match status" value="1"/>
</dbReference>
<dbReference type="SUPFAM" id="SSF53649">
    <property type="entry name" value="Alkaline phosphatase-like"/>
    <property type="match status" value="1"/>
</dbReference>
<dbReference type="SUPFAM" id="SSF143856">
    <property type="entry name" value="DeoB insert domain-like"/>
    <property type="match status" value="1"/>
</dbReference>
<accession>Q9KPL9</accession>
<name>DEOB_VIBCH</name>
<protein>
    <recommendedName>
        <fullName evidence="1">Phosphopentomutase</fullName>
        <ecNumber evidence="1">5.4.2.7</ecNumber>
    </recommendedName>
    <alternativeName>
        <fullName evidence="1">Phosphodeoxyribomutase</fullName>
    </alternativeName>
</protein>
<gene>
    <name evidence="1" type="primary">deoB</name>
    <name type="ordered locus">VC_2348</name>
</gene>